<reference key="1">
    <citation type="journal article" date="1996" name="J. Bacteriol.">
        <title>Sigma-B, a putative operon encoding alternate sigma factor of Staphylococcus aureus RNA polymerase: molecular cloning and DNA sequencing.</title>
        <authorList>
            <person name="Wu S.-W."/>
            <person name="de Lencastre H."/>
            <person name="Tomasz A."/>
        </authorList>
    </citation>
    <scope>NUCLEOTIDE SEQUENCE [GENOMIC DNA]</scope>
</reference>
<reference key="2">
    <citation type="journal article" date="2005" name="J. Bacteriol.">
        <title>Insights on evolution of virulence and resistance from the complete genome analysis of an early methicillin-resistant Staphylococcus aureus strain and a biofilm-producing methicillin-resistant Staphylococcus epidermidis strain.</title>
        <authorList>
            <person name="Gill S.R."/>
            <person name="Fouts D.E."/>
            <person name="Archer G.L."/>
            <person name="Mongodin E.F."/>
            <person name="DeBoy R.T."/>
            <person name="Ravel J."/>
            <person name="Paulsen I.T."/>
            <person name="Kolonay J.F."/>
            <person name="Brinkac L.M."/>
            <person name="Beanan M.J."/>
            <person name="Dodson R.J."/>
            <person name="Daugherty S.C."/>
            <person name="Madupu R."/>
            <person name="Angiuoli S.V."/>
            <person name="Durkin A.S."/>
            <person name="Haft D.H."/>
            <person name="Vamathevan J.J."/>
            <person name="Khouri H."/>
            <person name="Utterback T.R."/>
            <person name="Lee C."/>
            <person name="Dimitrov G."/>
            <person name="Jiang L."/>
            <person name="Qin H."/>
            <person name="Weidman J."/>
            <person name="Tran K."/>
            <person name="Kang K.H."/>
            <person name="Hance I.R."/>
            <person name="Nelson K.E."/>
            <person name="Fraser C.M."/>
        </authorList>
    </citation>
    <scope>NUCLEOTIDE SEQUENCE [LARGE SCALE GENOMIC DNA]</scope>
    <source>
        <strain>COL</strain>
    </source>
</reference>
<comment type="function">
    <text evidence="1">Positive regulator of sigma-B activity. Non-phosphorylated RsbV binds to RsbW, preventing its association with sigma-B. When phosphorylated, releases RsbW, which is then free to complex with and inactivate sigma-B (By similarity).</text>
</comment>
<comment type="PTM">
    <text evidence="1">Phosphorylated by RsbW on a serine residue.</text>
</comment>
<comment type="similarity">
    <text evidence="3">Belongs to the anti-sigma-factor antagonist family.</text>
</comment>
<dbReference type="EMBL" id="Y09929">
    <property type="protein sequence ID" value="CAA71066.1"/>
    <property type="molecule type" value="Genomic_DNA"/>
</dbReference>
<dbReference type="EMBL" id="CP000046">
    <property type="protein sequence ID" value="AAW37018.1"/>
    <property type="molecule type" value="Genomic_DNA"/>
</dbReference>
<dbReference type="RefSeq" id="WP_001052491.1">
    <property type="nucleotide sequence ID" value="NZ_JBGOFO010000007.1"/>
</dbReference>
<dbReference type="SMR" id="P60071"/>
<dbReference type="KEGG" id="sac:SACOL2056"/>
<dbReference type="HOGENOM" id="CLU_115403_9_3_9"/>
<dbReference type="Proteomes" id="UP000000530">
    <property type="component" value="Chromosome"/>
</dbReference>
<dbReference type="GO" id="GO:0043856">
    <property type="term" value="F:anti-sigma factor antagonist activity"/>
    <property type="evidence" value="ECO:0007669"/>
    <property type="project" value="InterPro"/>
</dbReference>
<dbReference type="CDD" id="cd07043">
    <property type="entry name" value="STAS_anti-anti-sigma_factors"/>
    <property type="match status" value="1"/>
</dbReference>
<dbReference type="FunFam" id="3.30.750.24:FF:000001">
    <property type="entry name" value="Anti-sigma factor antagonist"/>
    <property type="match status" value="1"/>
</dbReference>
<dbReference type="Gene3D" id="3.30.750.24">
    <property type="entry name" value="STAS domain"/>
    <property type="match status" value="1"/>
</dbReference>
<dbReference type="InterPro" id="IPR003658">
    <property type="entry name" value="Anti-sigma_ant"/>
</dbReference>
<dbReference type="InterPro" id="IPR002645">
    <property type="entry name" value="STAS_dom"/>
</dbReference>
<dbReference type="InterPro" id="IPR036513">
    <property type="entry name" value="STAS_dom_sf"/>
</dbReference>
<dbReference type="NCBIfam" id="TIGR00377">
    <property type="entry name" value="ant_ant_sig"/>
    <property type="match status" value="1"/>
</dbReference>
<dbReference type="PANTHER" id="PTHR33495">
    <property type="entry name" value="ANTI-SIGMA FACTOR ANTAGONIST TM_1081-RELATED-RELATED"/>
    <property type="match status" value="1"/>
</dbReference>
<dbReference type="PANTHER" id="PTHR33495:SF9">
    <property type="entry name" value="ANTI-SIGMA-B FACTOR ANTAGONIST"/>
    <property type="match status" value="1"/>
</dbReference>
<dbReference type="Pfam" id="PF01740">
    <property type="entry name" value="STAS"/>
    <property type="match status" value="1"/>
</dbReference>
<dbReference type="SUPFAM" id="SSF52091">
    <property type="entry name" value="SpoIIaa-like"/>
    <property type="match status" value="1"/>
</dbReference>
<dbReference type="PROSITE" id="PS50801">
    <property type="entry name" value="STAS"/>
    <property type="match status" value="1"/>
</dbReference>
<accession>P60071</accession>
<accession>O05343</accession>
<accession>P95842</accession>
<accession>Q5HED5</accession>
<protein>
    <recommendedName>
        <fullName>Anti-sigma-B factor antagonist</fullName>
    </recommendedName>
    <alternativeName>
        <fullName>Anti-anti-sigma-B factor</fullName>
    </alternativeName>
</protein>
<gene>
    <name type="primary">rsbV</name>
    <name type="ordered locus">SACOL2056</name>
</gene>
<organism>
    <name type="scientific">Staphylococcus aureus (strain COL)</name>
    <dbReference type="NCBI Taxonomy" id="93062"/>
    <lineage>
        <taxon>Bacteria</taxon>
        <taxon>Bacillati</taxon>
        <taxon>Bacillota</taxon>
        <taxon>Bacilli</taxon>
        <taxon>Bacillales</taxon>
        <taxon>Staphylococcaceae</taxon>
        <taxon>Staphylococcus</taxon>
    </lineage>
</organism>
<keyword id="KW-0597">Phosphoprotein</keyword>
<proteinExistence type="inferred from homology"/>
<evidence type="ECO:0000250" key="1"/>
<evidence type="ECO:0000255" key="2">
    <source>
        <dbReference type="PROSITE-ProRule" id="PRU00198"/>
    </source>
</evidence>
<evidence type="ECO:0000305" key="3"/>
<feature type="chain" id="PRO_0000194188" description="Anti-sigma-B factor antagonist">
    <location>
        <begin position="1"/>
        <end position="108"/>
    </location>
</feature>
<feature type="domain" description="STAS" evidence="2">
    <location>
        <begin position="3"/>
        <end position="108"/>
    </location>
</feature>
<feature type="modified residue" description="Phosphoserine" evidence="1">
    <location>
        <position position="57"/>
    </location>
</feature>
<feature type="sequence conflict" description="In Ref. 1; CAA71066." evidence="3" ref="1">
    <original>E</original>
    <variation>A</variation>
    <location>
        <position position="50"/>
    </location>
</feature>
<sequence>MNLNIETTTQDKFYEVKVGGELDVYTVPELEEVLTPMRQDGTRDIYVNLENVSYMDSTGLGLFVGTLKALNQNDKELYILGVSDRIGRLFEITGLKDLMHVNEGTEVE</sequence>
<name>RSBV_STAAC</name>